<feature type="chain" id="PRO_0000348126" description="Putative uncharacterized protein DDB_G0275597">
    <location>
        <begin position="1"/>
        <end position="105"/>
    </location>
</feature>
<feature type="region of interest" description="Disordered" evidence="1">
    <location>
        <begin position="81"/>
        <end position="105"/>
    </location>
</feature>
<name>Y7323_DICDI</name>
<accession>Q86H78</accession>
<accession>Q553I1</accession>
<evidence type="ECO:0000256" key="1">
    <source>
        <dbReference type="SAM" id="MobiDB-lite"/>
    </source>
</evidence>
<keyword id="KW-1185">Reference proteome</keyword>
<reference key="1">
    <citation type="journal article" date="2002" name="Nature">
        <title>Sequence and analysis of chromosome 2 of Dictyostelium discoideum.</title>
        <authorList>
            <person name="Gloeckner G."/>
            <person name="Eichinger L."/>
            <person name="Szafranski K."/>
            <person name="Pachebat J.A."/>
            <person name="Bankier A.T."/>
            <person name="Dear P.H."/>
            <person name="Lehmann R."/>
            <person name="Baumgart C."/>
            <person name="Parra G."/>
            <person name="Abril J.F."/>
            <person name="Guigo R."/>
            <person name="Kumpf K."/>
            <person name="Tunggal B."/>
            <person name="Cox E.C."/>
            <person name="Quail M.A."/>
            <person name="Platzer M."/>
            <person name="Rosenthal A."/>
            <person name="Noegel A.A."/>
        </authorList>
    </citation>
    <scope>NUCLEOTIDE SEQUENCE [LARGE SCALE GENOMIC DNA]</scope>
    <source>
        <strain>AX4</strain>
    </source>
</reference>
<reference key="2">
    <citation type="journal article" date="2005" name="Nature">
        <title>The genome of the social amoeba Dictyostelium discoideum.</title>
        <authorList>
            <person name="Eichinger L."/>
            <person name="Pachebat J.A."/>
            <person name="Gloeckner G."/>
            <person name="Rajandream M.A."/>
            <person name="Sucgang R."/>
            <person name="Berriman M."/>
            <person name="Song J."/>
            <person name="Olsen R."/>
            <person name="Szafranski K."/>
            <person name="Xu Q."/>
            <person name="Tunggal B."/>
            <person name="Kummerfeld S."/>
            <person name="Madera M."/>
            <person name="Konfortov B.A."/>
            <person name="Rivero F."/>
            <person name="Bankier A.T."/>
            <person name="Lehmann R."/>
            <person name="Hamlin N."/>
            <person name="Davies R."/>
            <person name="Gaudet P."/>
            <person name="Fey P."/>
            <person name="Pilcher K."/>
            <person name="Chen G."/>
            <person name="Saunders D."/>
            <person name="Sodergren E.J."/>
            <person name="Davis P."/>
            <person name="Kerhornou A."/>
            <person name="Nie X."/>
            <person name="Hall N."/>
            <person name="Anjard C."/>
            <person name="Hemphill L."/>
            <person name="Bason N."/>
            <person name="Farbrother P."/>
            <person name="Desany B."/>
            <person name="Just E."/>
            <person name="Morio T."/>
            <person name="Rost R."/>
            <person name="Churcher C.M."/>
            <person name="Cooper J."/>
            <person name="Haydock S."/>
            <person name="van Driessche N."/>
            <person name="Cronin A."/>
            <person name="Goodhead I."/>
            <person name="Muzny D.M."/>
            <person name="Mourier T."/>
            <person name="Pain A."/>
            <person name="Lu M."/>
            <person name="Harper D."/>
            <person name="Lindsay R."/>
            <person name="Hauser H."/>
            <person name="James K.D."/>
            <person name="Quiles M."/>
            <person name="Madan Babu M."/>
            <person name="Saito T."/>
            <person name="Buchrieser C."/>
            <person name="Wardroper A."/>
            <person name="Felder M."/>
            <person name="Thangavelu M."/>
            <person name="Johnson D."/>
            <person name="Knights A."/>
            <person name="Loulseged H."/>
            <person name="Mungall K.L."/>
            <person name="Oliver K."/>
            <person name="Price C."/>
            <person name="Quail M.A."/>
            <person name="Urushihara H."/>
            <person name="Hernandez J."/>
            <person name="Rabbinowitsch E."/>
            <person name="Steffen D."/>
            <person name="Sanders M."/>
            <person name="Ma J."/>
            <person name="Kohara Y."/>
            <person name="Sharp S."/>
            <person name="Simmonds M.N."/>
            <person name="Spiegler S."/>
            <person name="Tivey A."/>
            <person name="Sugano S."/>
            <person name="White B."/>
            <person name="Walker D."/>
            <person name="Woodward J.R."/>
            <person name="Winckler T."/>
            <person name="Tanaka Y."/>
            <person name="Shaulsky G."/>
            <person name="Schleicher M."/>
            <person name="Weinstock G.M."/>
            <person name="Rosenthal A."/>
            <person name="Cox E.C."/>
            <person name="Chisholm R.L."/>
            <person name="Gibbs R.A."/>
            <person name="Loomis W.F."/>
            <person name="Platzer M."/>
            <person name="Kay R.R."/>
            <person name="Williams J.G."/>
            <person name="Dear P.H."/>
            <person name="Noegel A.A."/>
            <person name="Barrell B.G."/>
            <person name="Kuspa A."/>
        </authorList>
    </citation>
    <scope>NUCLEOTIDE SEQUENCE [LARGE SCALE GENOMIC DNA]</scope>
    <source>
        <strain>AX4</strain>
    </source>
</reference>
<sequence>MERIQIISNHILPIVQHNNNNKQYYEQQYLLLANNTTDAIMELSEEHEKEESLRKIQCENNGIEYVYKPLFIDFGVHMNNNNNNKTITVDNNNNNNNNNNNNNNK</sequence>
<proteinExistence type="predicted"/>
<gene>
    <name type="ORF">DDB_G0275597</name>
</gene>
<dbReference type="EMBL" id="AAFI02000013">
    <property type="protein sequence ID" value="EAL69549.1"/>
    <property type="molecule type" value="Genomic_DNA"/>
</dbReference>
<dbReference type="RefSeq" id="XP_643432.1">
    <property type="nucleotide sequence ID" value="XM_638340.1"/>
</dbReference>
<dbReference type="PaxDb" id="44689-DDB0167323"/>
<dbReference type="EnsemblProtists" id="EAL69549">
    <property type="protein sequence ID" value="EAL69549"/>
    <property type="gene ID" value="DDB_G0275597"/>
</dbReference>
<dbReference type="GeneID" id="8620018"/>
<dbReference type="KEGG" id="ddi:DDB_G0275597"/>
<dbReference type="dictyBase" id="DDB_G0275597"/>
<dbReference type="VEuPathDB" id="AmoebaDB:DDB_G0275597"/>
<dbReference type="HOGENOM" id="CLU_2241669_0_0_1"/>
<dbReference type="InParanoid" id="Q86H78"/>
<dbReference type="PRO" id="PR:Q86H78"/>
<dbReference type="Proteomes" id="UP000002195">
    <property type="component" value="Chromosome 2"/>
</dbReference>
<protein>
    <recommendedName>
        <fullName>Putative uncharacterized protein DDB_G0275597</fullName>
    </recommendedName>
</protein>
<organism>
    <name type="scientific">Dictyostelium discoideum</name>
    <name type="common">Social amoeba</name>
    <dbReference type="NCBI Taxonomy" id="44689"/>
    <lineage>
        <taxon>Eukaryota</taxon>
        <taxon>Amoebozoa</taxon>
        <taxon>Evosea</taxon>
        <taxon>Eumycetozoa</taxon>
        <taxon>Dictyostelia</taxon>
        <taxon>Dictyosteliales</taxon>
        <taxon>Dictyosteliaceae</taxon>
        <taxon>Dictyostelium</taxon>
    </lineage>
</organism>